<reference key="1">
    <citation type="submission" date="1999-02" db="EMBL/GenBank/DDBJ databases">
        <authorList>
            <person name="Ueki T."/>
            <person name="Inouye S."/>
        </authorList>
    </citation>
    <scope>NUCLEOTIDE SEQUENCE [GENOMIC DNA]</scope>
    <source>
        <strain>DZF1</strain>
    </source>
</reference>
<feature type="chain" id="PRO_0000179599" description="ATP-dependent Clp protease proteolytic subunit 2">
    <location>
        <begin position="1"/>
        <end position="206"/>
    </location>
</feature>
<feature type="active site" description="Nucleophile" evidence="1">
    <location>
        <position position="100"/>
    </location>
</feature>
<feature type="active site" evidence="1">
    <location>
        <position position="125"/>
    </location>
</feature>
<accession>Q9X5N0</accession>
<name>CLPP2_MYXXA</name>
<dbReference type="EC" id="3.4.21.92" evidence="1"/>
<dbReference type="EMBL" id="AF127082">
    <property type="protein sequence ID" value="AAD31002.1"/>
    <property type="molecule type" value="Genomic_DNA"/>
</dbReference>
<dbReference type="SMR" id="Q9X5N0"/>
<dbReference type="MEROPS" id="S14.001"/>
<dbReference type="GO" id="GO:0005737">
    <property type="term" value="C:cytoplasm"/>
    <property type="evidence" value="ECO:0007669"/>
    <property type="project" value="UniProtKB-SubCell"/>
</dbReference>
<dbReference type="GO" id="GO:0009368">
    <property type="term" value="C:endopeptidase Clp complex"/>
    <property type="evidence" value="ECO:0007669"/>
    <property type="project" value="TreeGrafter"/>
</dbReference>
<dbReference type="GO" id="GO:0004176">
    <property type="term" value="F:ATP-dependent peptidase activity"/>
    <property type="evidence" value="ECO:0007669"/>
    <property type="project" value="InterPro"/>
</dbReference>
<dbReference type="GO" id="GO:0051117">
    <property type="term" value="F:ATPase binding"/>
    <property type="evidence" value="ECO:0007669"/>
    <property type="project" value="TreeGrafter"/>
</dbReference>
<dbReference type="GO" id="GO:0004252">
    <property type="term" value="F:serine-type endopeptidase activity"/>
    <property type="evidence" value="ECO:0007669"/>
    <property type="project" value="UniProtKB-UniRule"/>
</dbReference>
<dbReference type="GO" id="GO:0006515">
    <property type="term" value="P:protein quality control for misfolded or incompletely synthesized proteins"/>
    <property type="evidence" value="ECO:0007669"/>
    <property type="project" value="TreeGrafter"/>
</dbReference>
<dbReference type="CDD" id="cd07017">
    <property type="entry name" value="S14_ClpP_2"/>
    <property type="match status" value="1"/>
</dbReference>
<dbReference type="FunFam" id="3.90.226.10:FF:000001">
    <property type="entry name" value="ATP-dependent Clp protease proteolytic subunit"/>
    <property type="match status" value="1"/>
</dbReference>
<dbReference type="Gene3D" id="3.90.226.10">
    <property type="entry name" value="2-enoyl-CoA Hydratase, Chain A, domain 1"/>
    <property type="match status" value="1"/>
</dbReference>
<dbReference type="HAMAP" id="MF_00444">
    <property type="entry name" value="ClpP"/>
    <property type="match status" value="1"/>
</dbReference>
<dbReference type="InterPro" id="IPR001907">
    <property type="entry name" value="ClpP"/>
</dbReference>
<dbReference type="InterPro" id="IPR029045">
    <property type="entry name" value="ClpP/crotonase-like_dom_sf"/>
</dbReference>
<dbReference type="InterPro" id="IPR023562">
    <property type="entry name" value="ClpP/TepA"/>
</dbReference>
<dbReference type="InterPro" id="IPR033135">
    <property type="entry name" value="ClpP_His_AS"/>
</dbReference>
<dbReference type="InterPro" id="IPR018215">
    <property type="entry name" value="ClpP_Ser_AS"/>
</dbReference>
<dbReference type="NCBIfam" id="TIGR00493">
    <property type="entry name" value="clpP"/>
    <property type="match status" value="1"/>
</dbReference>
<dbReference type="NCBIfam" id="NF001368">
    <property type="entry name" value="PRK00277.1"/>
    <property type="match status" value="1"/>
</dbReference>
<dbReference type="NCBIfam" id="NF009205">
    <property type="entry name" value="PRK12553.1"/>
    <property type="match status" value="1"/>
</dbReference>
<dbReference type="PANTHER" id="PTHR10381">
    <property type="entry name" value="ATP-DEPENDENT CLP PROTEASE PROTEOLYTIC SUBUNIT"/>
    <property type="match status" value="1"/>
</dbReference>
<dbReference type="PANTHER" id="PTHR10381:SF70">
    <property type="entry name" value="ATP-DEPENDENT CLP PROTEASE PROTEOLYTIC SUBUNIT"/>
    <property type="match status" value="1"/>
</dbReference>
<dbReference type="Pfam" id="PF00574">
    <property type="entry name" value="CLP_protease"/>
    <property type="match status" value="1"/>
</dbReference>
<dbReference type="PRINTS" id="PR00127">
    <property type="entry name" value="CLPPROTEASEP"/>
</dbReference>
<dbReference type="SUPFAM" id="SSF52096">
    <property type="entry name" value="ClpP/crotonase"/>
    <property type="match status" value="1"/>
</dbReference>
<dbReference type="PROSITE" id="PS00382">
    <property type="entry name" value="CLP_PROTEASE_HIS"/>
    <property type="match status" value="1"/>
</dbReference>
<dbReference type="PROSITE" id="PS00381">
    <property type="entry name" value="CLP_PROTEASE_SER"/>
    <property type="match status" value="1"/>
</dbReference>
<sequence>MPFMPVPYVIEQTHRGERSYDIISRLLKDRIVMLGTEIDDDVANVIVAQLLFLESEDPDKDINLYINSPGGSVTAGLAIYDTMQYVKCPVSTICVGQAASMGAVLLLAGAKGKRYALPSSRIMIHQPLGGVRGQATDIEIQAKEILRMKAKLNELIVKHTGQSIERVEKDTDRDYFMGASEAKAYGIIDEIQNPRKVVGLGKEEKK</sequence>
<organism>
    <name type="scientific">Myxococcus xanthus</name>
    <dbReference type="NCBI Taxonomy" id="34"/>
    <lineage>
        <taxon>Bacteria</taxon>
        <taxon>Pseudomonadati</taxon>
        <taxon>Myxococcota</taxon>
        <taxon>Myxococcia</taxon>
        <taxon>Myxococcales</taxon>
        <taxon>Cystobacterineae</taxon>
        <taxon>Myxococcaceae</taxon>
        <taxon>Myxococcus</taxon>
    </lineage>
</organism>
<protein>
    <recommendedName>
        <fullName evidence="1">ATP-dependent Clp protease proteolytic subunit 2</fullName>
        <ecNumber evidence="1">3.4.21.92</ecNumber>
    </recommendedName>
    <alternativeName>
        <fullName evidence="1">Endopeptidase Clp 2</fullName>
    </alternativeName>
</protein>
<gene>
    <name evidence="1" type="primary">clpP2</name>
    <name type="synonym">clpP</name>
</gene>
<proteinExistence type="inferred from homology"/>
<keyword id="KW-0963">Cytoplasm</keyword>
<keyword id="KW-0378">Hydrolase</keyword>
<keyword id="KW-0645">Protease</keyword>
<keyword id="KW-0720">Serine protease</keyword>
<evidence type="ECO:0000255" key="1">
    <source>
        <dbReference type="HAMAP-Rule" id="MF_00444"/>
    </source>
</evidence>
<comment type="function">
    <text evidence="1">Cleaves peptides in various proteins in a process that requires ATP hydrolysis. Has a chymotrypsin-like activity. Plays a major role in the degradation of misfolded proteins.</text>
</comment>
<comment type="catalytic activity">
    <reaction evidence="1">
        <text>Hydrolysis of proteins to small peptides in the presence of ATP and magnesium. alpha-casein is the usual test substrate. In the absence of ATP, only oligopeptides shorter than five residues are hydrolyzed (such as succinyl-Leu-Tyr-|-NHMec, and Leu-Tyr-Leu-|-Tyr-Trp, in which cleavage of the -Tyr-|-Leu- and -Tyr-|-Trp bonds also occurs).</text>
        <dbReference type="EC" id="3.4.21.92"/>
    </reaction>
</comment>
<comment type="subunit">
    <text evidence="1">Fourteen ClpP subunits assemble into 2 heptameric rings which stack back to back to give a disk-like structure with a central cavity, resembling the structure of eukaryotic proteasomes.</text>
</comment>
<comment type="subcellular location">
    <subcellularLocation>
        <location evidence="1">Cytoplasm</location>
    </subcellularLocation>
</comment>
<comment type="similarity">
    <text evidence="1">Belongs to the peptidase S14 family.</text>
</comment>